<feature type="chain" id="PRO_0000352236" description="NAD(P)H-quinone oxidoreductase subunit N">
    <location>
        <begin position="1"/>
        <end position="153"/>
    </location>
</feature>
<evidence type="ECO:0000255" key="1">
    <source>
        <dbReference type="HAMAP-Rule" id="MF_01353"/>
    </source>
</evidence>
<organism>
    <name type="scientific">Synechococcus sp. (strain CC9605)</name>
    <dbReference type="NCBI Taxonomy" id="110662"/>
    <lineage>
        <taxon>Bacteria</taxon>
        <taxon>Bacillati</taxon>
        <taxon>Cyanobacteriota</taxon>
        <taxon>Cyanophyceae</taxon>
        <taxon>Synechococcales</taxon>
        <taxon>Synechococcaceae</taxon>
        <taxon>Synechococcus</taxon>
    </lineage>
</organism>
<keyword id="KW-0472">Membrane</keyword>
<keyword id="KW-0520">NAD</keyword>
<keyword id="KW-0521">NADP</keyword>
<keyword id="KW-0618">Plastoquinone</keyword>
<keyword id="KW-0874">Quinone</keyword>
<keyword id="KW-0793">Thylakoid</keyword>
<keyword id="KW-1278">Translocase</keyword>
<keyword id="KW-0813">Transport</keyword>
<gene>
    <name evidence="1" type="primary">ndhN</name>
    <name type="ordered locus">Syncc9605_0377</name>
</gene>
<proteinExistence type="inferred from homology"/>
<name>NDHN_SYNSC</name>
<sequence length="153" mass="16699">MPLLLTGQAFRRDLEANGCLAVQAPLEGGAETRLLRRLRGAGYSTRMTSARGLGDPEVFLTQKHGIRPPHLGHQSVGRGAAVGEVQEVAPQLGDLFESDAPVALWLLEGQVLSRSELLSLCDLCKREPRLRIIVEMGGARSLKWEPMTTYLKA</sequence>
<reference key="1">
    <citation type="submission" date="2005-07" db="EMBL/GenBank/DDBJ databases">
        <title>Complete sequence of Synechococcus sp. CC9605.</title>
        <authorList>
            <consortium name="US DOE Joint Genome Institute"/>
            <person name="Copeland A."/>
            <person name="Lucas S."/>
            <person name="Lapidus A."/>
            <person name="Barry K."/>
            <person name="Detter J.C."/>
            <person name="Glavina T."/>
            <person name="Hammon N."/>
            <person name="Israni S."/>
            <person name="Pitluck S."/>
            <person name="Schmutz J."/>
            <person name="Martinez M."/>
            <person name="Larimer F."/>
            <person name="Land M."/>
            <person name="Kyrpides N."/>
            <person name="Ivanova N."/>
            <person name="Richardson P."/>
        </authorList>
    </citation>
    <scope>NUCLEOTIDE SEQUENCE [LARGE SCALE GENOMIC DNA]</scope>
    <source>
        <strain>CC9605</strain>
    </source>
</reference>
<protein>
    <recommendedName>
        <fullName evidence="1">NAD(P)H-quinone oxidoreductase subunit N</fullName>
        <ecNumber evidence="1">7.1.1.-</ecNumber>
    </recommendedName>
    <alternativeName>
        <fullName evidence="1">NAD(P)H dehydrogenase I subunit N</fullName>
        <shortName evidence="1">NDH-1 subunit N</shortName>
        <shortName evidence="1">NDH-N</shortName>
    </alternativeName>
</protein>
<accession>Q3AMM9</accession>
<dbReference type="EC" id="7.1.1.-" evidence="1"/>
<dbReference type="EMBL" id="CP000110">
    <property type="protein sequence ID" value="ABB34153.1"/>
    <property type="molecule type" value="Genomic_DNA"/>
</dbReference>
<dbReference type="RefSeq" id="WP_011363390.1">
    <property type="nucleotide sequence ID" value="NC_007516.1"/>
</dbReference>
<dbReference type="SMR" id="Q3AMM9"/>
<dbReference type="STRING" id="110662.Syncc9605_0377"/>
<dbReference type="KEGG" id="syd:Syncc9605_0377"/>
<dbReference type="eggNOG" id="ENOG502ZBMI">
    <property type="taxonomic scope" value="Bacteria"/>
</dbReference>
<dbReference type="HOGENOM" id="CLU_087432_0_0_3"/>
<dbReference type="OrthoDB" id="510798at2"/>
<dbReference type="GO" id="GO:0031676">
    <property type="term" value="C:plasma membrane-derived thylakoid membrane"/>
    <property type="evidence" value="ECO:0007669"/>
    <property type="project" value="UniProtKB-SubCell"/>
</dbReference>
<dbReference type="GO" id="GO:0016655">
    <property type="term" value="F:oxidoreductase activity, acting on NAD(P)H, quinone or similar compound as acceptor"/>
    <property type="evidence" value="ECO:0007669"/>
    <property type="project" value="UniProtKB-UniRule"/>
</dbReference>
<dbReference type="GO" id="GO:0048038">
    <property type="term" value="F:quinone binding"/>
    <property type="evidence" value="ECO:0007669"/>
    <property type="project" value="UniProtKB-KW"/>
</dbReference>
<dbReference type="HAMAP" id="MF_01353">
    <property type="entry name" value="NDH1_NDH1N"/>
    <property type="match status" value="1"/>
</dbReference>
<dbReference type="InterPro" id="IPR020874">
    <property type="entry name" value="NAD(P)H-quinone_OxRdtase_su_N"/>
</dbReference>
<dbReference type="PANTHER" id="PTHR35515">
    <property type="entry name" value="NAD(P)H-QUINONE OXIDOREDUCTASE SUBUNIT N, CHLOROPLASTIC"/>
    <property type="match status" value="1"/>
</dbReference>
<dbReference type="PANTHER" id="PTHR35515:SF1">
    <property type="entry name" value="NAD(P)H-QUINONE OXIDOREDUCTASE SUBUNIT N, CHLOROPLASTIC"/>
    <property type="match status" value="1"/>
</dbReference>
<dbReference type="Pfam" id="PF11909">
    <property type="entry name" value="NdhN"/>
    <property type="match status" value="1"/>
</dbReference>
<comment type="function">
    <text evidence="1">NDH-1 shuttles electrons from an unknown electron donor, via FMN and iron-sulfur (Fe-S) centers, to quinones in the respiratory and/or the photosynthetic chain. The immediate electron acceptor for the enzyme in this species is believed to be plastoquinone. Couples the redox reaction to proton translocation, and thus conserves the redox energy in a proton gradient. Cyanobacterial NDH-1 also plays a role in inorganic carbon-concentration.</text>
</comment>
<comment type="catalytic activity">
    <reaction evidence="1">
        <text>a plastoquinone + NADH + (n+1) H(+)(in) = a plastoquinol + NAD(+) + n H(+)(out)</text>
        <dbReference type="Rhea" id="RHEA:42608"/>
        <dbReference type="Rhea" id="RHEA-COMP:9561"/>
        <dbReference type="Rhea" id="RHEA-COMP:9562"/>
        <dbReference type="ChEBI" id="CHEBI:15378"/>
        <dbReference type="ChEBI" id="CHEBI:17757"/>
        <dbReference type="ChEBI" id="CHEBI:57540"/>
        <dbReference type="ChEBI" id="CHEBI:57945"/>
        <dbReference type="ChEBI" id="CHEBI:62192"/>
    </reaction>
</comment>
<comment type="catalytic activity">
    <reaction evidence="1">
        <text>a plastoquinone + NADPH + (n+1) H(+)(in) = a plastoquinol + NADP(+) + n H(+)(out)</text>
        <dbReference type="Rhea" id="RHEA:42612"/>
        <dbReference type="Rhea" id="RHEA-COMP:9561"/>
        <dbReference type="Rhea" id="RHEA-COMP:9562"/>
        <dbReference type="ChEBI" id="CHEBI:15378"/>
        <dbReference type="ChEBI" id="CHEBI:17757"/>
        <dbReference type="ChEBI" id="CHEBI:57783"/>
        <dbReference type="ChEBI" id="CHEBI:58349"/>
        <dbReference type="ChEBI" id="CHEBI:62192"/>
    </reaction>
</comment>
<comment type="subunit">
    <text evidence="1">NDH-1 can be composed of about 15 different subunits; different subcomplexes with different compositions have been identified which probably have different functions.</text>
</comment>
<comment type="subcellular location">
    <subcellularLocation>
        <location evidence="1">Cellular thylakoid membrane</location>
        <topology evidence="1">Peripheral membrane protein</topology>
        <orientation evidence="1">Cytoplasmic side</orientation>
    </subcellularLocation>
</comment>
<comment type="similarity">
    <text evidence="1">Belongs to the complex I NdhN subunit family.</text>
</comment>